<reference key="1">
    <citation type="journal article" date="2002" name="Nature">
        <title>The genome sequence and structure of rice chromosome 1.</title>
        <authorList>
            <person name="Sasaki T."/>
            <person name="Matsumoto T."/>
            <person name="Yamamoto K."/>
            <person name="Sakata K."/>
            <person name="Baba T."/>
            <person name="Katayose Y."/>
            <person name="Wu J."/>
            <person name="Niimura Y."/>
            <person name="Cheng Z."/>
            <person name="Nagamura Y."/>
            <person name="Antonio B.A."/>
            <person name="Kanamori H."/>
            <person name="Hosokawa S."/>
            <person name="Masukawa M."/>
            <person name="Arikawa K."/>
            <person name="Chiden Y."/>
            <person name="Hayashi M."/>
            <person name="Okamoto M."/>
            <person name="Ando T."/>
            <person name="Aoki H."/>
            <person name="Arita K."/>
            <person name="Hamada M."/>
            <person name="Harada C."/>
            <person name="Hijishita S."/>
            <person name="Honda M."/>
            <person name="Ichikawa Y."/>
            <person name="Idonuma A."/>
            <person name="Iijima M."/>
            <person name="Ikeda M."/>
            <person name="Ikeno M."/>
            <person name="Ito S."/>
            <person name="Ito T."/>
            <person name="Ito Y."/>
            <person name="Ito Y."/>
            <person name="Iwabuchi A."/>
            <person name="Kamiya K."/>
            <person name="Karasawa W."/>
            <person name="Katagiri S."/>
            <person name="Kikuta A."/>
            <person name="Kobayashi N."/>
            <person name="Kono I."/>
            <person name="Machita K."/>
            <person name="Maehara T."/>
            <person name="Mizuno H."/>
            <person name="Mizubayashi T."/>
            <person name="Mukai Y."/>
            <person name="Nagasaki H."/>
            <person name="Nakashima M."/>
            <person name="Nakama Y."/>
            <person name="Nakamichi Y."/>
            <person name="Nakamura M."/>
            <person name="Namiki N."/>
            <person name="Negishi M."/>
            <person name="Ohta I."/>
            <person name="Ono N."/>
            <person name="Saji S."/>
            <person name="Sakai K."/>
            <person name="Shibata M."/>
            <person name="Shimokawa T."/>
            <person name="Shomura A."/>
            <person name="Song J."/>
            <person name="Takazaki Y."/>
            <person name="Terasawa K."/>
            <person name="Tsuji K."/>
            <person name="Waki K."/>
            <person name="Yamagata H."/>
            <person name="Yamane H."/>
            <person name="Yoshiki S."/>
            <person name="Yoshihara R."/>
            <person name="Yukawa K."/>
            <person name="Zhong H."/>
            <person name="Iwama H."/>
            <person name="Endo T."/>
            <person name="Ito H."/>
            <person name="Hahn J.H."/>
            <person name="Kim H.-I."/>
            <person name="Eun M.-Y."/>
            <person name="Yano M."/>
            <person name="Jiang J."/>
            <person name="Gojobori T."/>
        </authorList>
    </citation>
    <scope>NUCLEOTIDE SEQUENCE [LARGE SCALE GENOMIC DNA]</scope>
    <source>
        <strain>cv. Nipponbare</strain>
    </source>
</reference>
<reference key="2">
    <citation type="journal article" date="2005" name="Nature">
        <title>The map-based sequence of the rice genome.</title>
        <authorList>
            <consortium name="International rice genome sequencing project (IRGSP)"/>
        </authorList>
    </citation>
    <scope>NUCLEOTIDE SEQUENCE [LARGE SCALE GENOMIC DNA]</scope>
    <source>
        <strain>cv. Nipponbare</strain>
    </source>
</reference>
<reference key="3">
    <citation type="journal article" date="2008" name="Nucleic Acids Res.">
        <title>The rice annotation project database (RAP-DB): 2008 update.</title>
        <authorList>
            <consortium name="The rice annotation project (RAP)"/>
        </authorList>
    </citation>
    <scope>GENOME REANNOTATION</scope>
    <source>
        <strain>cv. Nipponbare</strain>
    </source>
</reference>
<reference key="4">
    <citation type="journal article" date="2013" name="Rice">
        <title>Improvement of the Oryza sativa Nipponbare reference genome using next generation sequence and optical map data.</title>
        <authorList>
            <person name="Kawahara Y."/>
            <person name="de la Bastide M."/>
            <person name="Hamilton J.P."/>
            <person name="Kanamori H."/>
            <person name="McCombie W.R."/>
            <person name="Ouyang S."/>
            <person name="Schwartz D.C."/>
            <person name="Tanaka T."/>
            <person name="Wu J."/>
            <person name="Zhou S."/>
            <person name="Childs K.L."/>
            <person name="Davidson R.M."/>
            <person name="Lin H."/>
            <person name="Quesada-Ocampo L."/>
            <person name="Vaillancourt B."/>
            <person name="Sakai H."/>
            <person name="Lee S.S."/>
            <person name="Kim J."/>
            <person name="Numa H."/>
            <person name="Itoh T."/>
            <person name="Buell C.R."/>
            <person name="Matsumoto T."/>
        </authorList>
    </citation>
    <scope>GENOME REANNOTATION</scope>
    <source>
        <strain>cv. Nipponbare</strain>
    </source>
</reference>
<reference key="5">
    <citation type="journal article" date="2005" name="PLoS Biol.">
        <title>The genomes of Oryza sativa: a history of duplications.</title>
        <authorList>
            <person name="Yu J."/>
            <person name="Wang J."/>
            <person name="Lin W."/>
            <person name="Li S."/>
            <person name="Li H."/>
            <person name="Zhou J."/>
            <person name="Ni P."/>
            <person name="Dong W."/>
            <person name="Hu S."/>
            <person name="Zeng C."/>
            <person name="Zhang J."/>
            <person name="Zhang Y."/>
            <person name="Li R."/>
            <person name="Xu Z."/>
            <person name="Li S."/>
            <person name="Li X."/>
            <person name="Zheng H."/>
            <person name="Cong L."/>
            <person name="Lin L."/>
            <person name="Yin J."/>
            <person name="Geng J."/>
            <person name="Li G."/>
            <person name="Shi J."/>
            <person name="Liu J."/>
            <person name="Lv H."/>
            <person name="Li J."/>
            <person name="Wang J."/>
            <person name="Deng Y."/>
            <person name="Ran L."/>
            <person name="Shi X."/>
            <person name="Wang X."/>
            <person name="Wu Q."/>
            <person name="Li C."/>
            <person name="Ren X."/>
            <person name="Wang J."/>
            <person name="Wang X."/>
            <person name="Li D."/>
            <person name="Liu D."/>
            <person name="Zhang X."/>
            <person name="Ji Z."/>
            <person name="Zhao W."/>
            <person name="Sun Y."/>
            <person name="Zhang Z."/>
            <person name="Bao J."/>
            <person name="Han Y."/>
            <person name="Dong L."/>
            <person name="Ji J."/>
            <person name="Chen P."/>
            <person name="Wu S."/>
            <person name="Liu J."/>
            <person name="Xiao Y."/>
            <person name="Bu D."/>
            <person name="Tan J."/>
            <person name="Yang L."/>
            <person name="Ye C."/>
            <person name="Zhang J."/>
            <person name="Xu J."/>
            <person name="Zhou Y."/>
            <person name="Yu Y."/>
            <person name="Zhang B."/>
            <person name="Zhuang S."/>
            <person name="Wei H."/>
            <person name="Liu B."/>
            <person name="Lei M."/>
            <person name="Yu H."/>
            <person name="Li Y."/>
            <person name="Xu H."/>
            <person name="Wei S."/>
            <person name="He X."/>
            <person name="Fang L."/>
            <person name="Zhang Z."/>
            <person name="Zhang Y."/>
            <person name="Huang X."/>
            <person name="Su Z."/>
            <person name="Tong W."/>
            <person name="Li J."/>
            <person name="Tong Z."/>
            <person name="Li S."/>
            <person name="Ye J."/>
            <person name="Wang L."/>
            <person name="Fang L."/>
            <person name="Lei T."/>
            <person name="Chen C.-S."/>
            <person name="Chen H.-C."/>
            <person name="Xu Z."/>
            <person name="Li H."/>
            <person name="Huang H."/>
            <person name="Zhang F."/>
            <person name="Xu H."/>
            <person name="Li N."/>
            <person name="Zhao C."/>
            <person name="Li S."/>
            <person name="Dong L."/>
            <person name="Huang Y."/>
            <person name="Li L."/>
            <person name="Xi Y."/>
            <person name="Qi Q."/>
            <person name="Li W."/>
            <person name="Zhang B."/>
            <person name="Hu W."/>
            <person name="Zhang Y."/>
            <person name="Tian X."/>
            <person name="Jiao Y."/>
            <person name="Liang X."/>
            <person name="Jin J."/>
            <person name="Gao L."/>
            <person name="Zheng W."/>
            <person name="Hao B."/>
            <person name="Liu S.-M."/>
            <person name="Wang W."/>
            <person name="Yuan L."/>
            <person name="Cao M."/>
            <person name="McDermott J."/>
            <person name="Samudrala R."/>
            <person name="Wang J."/>
            <person name="Wong G.K.-S."/>
            <person name="Yang H."/>
        </authorList>
    </citation>
    <scope>NUCLEOTIDE SEQUENCE [LARGE SCALE GENOMIC DNA]</scope>
    <source>
        <strain>cv. Nipponbare</strain>
    </source>
</reference>
<reference key="6">
    <citation type="journal article" date="2005" name="Plant Cell Physiol.">
        <title>Identification of 33 rice aquaporin genes and analysis of their expression and function.</title>
        <authorList>
            <person name="Sakurai J."/>
            <person name="Ishikawa F."/>
            <person name="Yamaguchi T."/>
            <person name="Uemura M."/>
            <person name="Maeshima M."/>
        </authorList>
    </citation>
    <scope>NOMENCLATURE</scope>
    <scope>TISSUE SPECIFICITY</scope>
</reference>
<keyword id="KW-0472">Membrane</keyword>
<keyword id="KW-1185">Reference proteome</keyword>
<keyword id="KW-0677">Repeat</keyword>
<keyword id="KW-0812">Transmembrane</keyword>
<keyword id="KW-1133">Transmembrane helix</keyword>
<keyword id="KW-0813">Transport</keyword>
<feature type="chain" id="PRO_0000286027" description="Aquaporin NIP1-2">
    <location>
        <begin position="1"/>
        <end position="303"/>
    </location>
</feature>
<feature type="transmembrane region" description="Helical; Name=1" evidence="2">
    <location>
        <begin position="66"/>
        <end position="86"/>
    </location>
</feature>
<feature type="transmembrane region" description="Helical; Name=2" evidence="2">
    <location>
        <begin position="91"/>
        <end position="111"/>
    </location>
</feature>
<feature type="transmembrane region" description="Helical; Name=3" evidence="2">
    <location>
        <begin position="145"/>
        <end position="165"/>
    </location>
</feature>
<feature type="transmembrane region" description="Helical; Name=4" evidence="2">
    <location>
        <begin position="188"/>
        <end position="208"/>
    </location>
</feature>
<feature type="transmembrane region" description="Helical; Name=5" evidence="2">
    <location>
        <begin position="212"/>
        <end position="232"/>
    </location>
</feature>
<feature type="transmembrane region" description="Helical; Name=6" evidence="2">
    <location>
        <begin position="255"/>
        <end position="275"/>
    </location>
</feature>
<feature type="region of interest" description="Disordered" evidence="3">
    <location>
        <begin position="1"/>
        <end position="39"/>
    </location>
</feature>
<feature type="short sequence motif" description="NPA 1">
    <location>
        <begin position="123"/>
        <end position="125"/>
    </location>
</feature>
<feature type="short sequence motif" description="NPA 2">
    <location>
        <begin position="241"/>
        <end position="243"/>
    </location>
</feature>
<feature type="compositionally biased region" description="Basic and acidic residues" evidence="3">
    <location>
        <begin position="17"/>
        <end position="26"/>
    </location>
</feature>
<protein>
    <recommendedName>
        <fullName>Aquaporin NIP1-2</fullName>
    </recommendedName>
    <alternativeName>
        <fullName>NOD26-like intrinsic protein 1-2</fullName>
    </alternativeName>
    <alternativeName>
        <fullName>OsNIP1;2</fullName>
    </alternativeName>
</protein>
<organism>
    <name type="scientific">Oryza sativa subsp. japonica</name>
    <name type="common">Rice</name>
    <dbReference type="NCBI Taxonomy" id="39947"/>
    <lineage>
        <taxon>Eukaryota</taxon>
        <taxon>Viridiplantae</taxon>
        <taxon>Streptophyta</taxon>
        <taxon>Embryophyta</taxon>
        <taxon>Tracheophyta</taxon>
        <taxon>Spermatophyta</taxon>
        <taxon>Magnoliopsida</taxon>
        <taxon>Liliopsida</taxon>
        <taxon>Poales</taxon>
        <taxon>Poaceae</taxon>
        <taxon>BOP clade</taxon>
        <taxon>Oryzoideae</taxon>
        <taxon>Oryzeae</taxon>
        <taxon>Oryzinae</taxon>
        <taxon>Oryza</taxon>
        <taxon>Oryza sativa</taxon>
    </lineage>
</organism>
<sequence>MAGREDGAAAGAMEEGQDSKEVKCESSEDGSSSSSSSRCHGNDVISVQFMQKVHPWCMCMNKNLLILAEILGTYFMIFAGCGAVVVNQSTGGAVTFPGICAVWGLVVMVLVYTVSHISGAHFNPAVTVAFATCGRFRWKQVPSYVVAQVLGSTMASLTLRVVFGGGGGGARGEHLFFGTTPAGSMAQAAALEFVISFFLMFVVSGVATDNRAIGELAGLAVGATVAVNVLFAGPVTGASMNPARSLGPAMVAGRYGGVWVYVAAPVSGTVCGAWAYNLLRFTDKPLRDIANTASFLRRSSRRS</sequence>
<accession>Q0JPT5</accession>
<accession>Q0JPT6</accession>
<accession>Q5QN31</accession>
<proteinExistence type="evidence at transcript level"/>
<comment type="function">
    <text evidence="1">Aquaporins facilitate the transport of water and small neutral solutes across cell membranes.</text>
</comment>
<comment type="subcellular location">
    <subcellularLocation>
        <location evidence="5">Membrane</location>
        <topology evidence="5">Multi-pass membrane protein</topology>
    </subcellularLocation>
</comment>
<comment type="tissue specificity">
    <text evidence="4">Expressed in roots and leaves, and at lower levels in anthers.</text>
</comment>
<comment type="domain">
    <text>Aquaporins contain two tandem repeats each containing three membrane-spanning domains and a pore-forming loop with the signature motif Asn-Pro-Ala (NPA).</text>
</comment>
<comment type="similarity">
    <text evidence="5">Belongs to the MIP/aquaporin (TC 1.A.8) family. NIP (TC 1.A.8.12) subfamily.</text>
</comment>
<comment type="sequence caution" evidence="5">
    <conflict type="erroneous gene model prediction">
        <sequence resource="EMBL-CDS" id="BAF04242"/>
    </conflict>
    <text>Was originally thought to correspond to two different genes Os01g0202800 and Os01g0202900.</text>
</comment>
<comment type="sequence caution" evidence="5">
    <conflict type="erroneous gene model prediction">
        <sequence resource="EMBL-CDS" id="BAF04243"/>
    </conflict>
    <text>Was originally thought to correspond to two different genes Os01g0202800 and Os01g0202900.</text>
</comment>
<gene>
    <name type="primary">NIP1-2</name>
    <name type="ordered locus">Os01g0202800</name>
    <name type="ordered locus">Os01g0202900</name>
    <name type="ordered locus">LOC_Os01g10600</name>
    <name type="ORF">OsJ_000763</name>
    <name type="ORF">P0489A05.30</name>
</gene>
<evidence type="ECO:0000250" key="1"/>
<evidence type="ECO:0000255" key="2"/>
<evidence type="ECO:0000256" key="3">
    <source>
        <dbReference type="SAM" id="MobiDB-lite"/>
    </source>
</evidence>
<evidence type="ECO:0000269" key="4">
    <source>
    </source>
</evidence>
<evidence type="ECO:0000305" key="5"/>
<dbReference type="EMBL" id="AP003105">
    <property type="protein sequence ID" value="BAD73177.1"/>
    <property type="molecule type" value="Genomic_DNA"/>
</dbReference>
<dbReference type="EMBL" id="AP008207">
    <property type="protein sequence ID" value="BAF04242.1"/>
    <property type="status" value="ALT_SEQ"/>
    <property type="molecule type" value="Genomic_DNA"/>
</dbReference>
<dbReference type="EMBL" id="AP008207">
    <property type="protein sequence ID" value="BAF04243.2"/>
    <property type="status" value="ALT_SEQ"/>
    <property type="molecule type" value="Genomic_DNA"/>
</dbReference>
<dbReference type="EMBL" id="AP014957">
    <property type="status" value="NOT_ANNOTATED_CDS"/>
    <property type="molecule type" value="Genomic_DNA"/>
</dbReference>
<dbReference type="EMBL" id="CM000138">
    <property type="protein sequence ID" value="EAZ10938.1"/>
    <property type="molecule type" value="Genomic_DNA"/>
</dbReference>
<dbReference type="SMR" id="Q0JPT5"/>
<dbReference type="FunCoup" id="Q0JPT5">
    <property type="interactions" value="13"/>
</dbReference>
<dbReference type="STRING" id="39947.Q0JPT5"/>
<dbReference type="PaxDb" id="39947-Q0JPT5"/>
<dbReference type="KEGG" id="dosa:Os01g0202800"/>
<dbReference type="KEGG" id="dosa:Os01g0202900"/>
<dbReference type="eggNOG" id="KOG0223">
    <property type="taxonomic scope" value="Eukaryota"/>
</dbReference>
<dbReference type="HOGENOM" id="CLU_020019_3_1_1"/>
<dbReference type="InParanoid" id="Q0JPT5"/>
<dbReference type="Proteomes" id="UP000000763">
    <property type="component" value="Chromosome 1"/>
</dbReference>
<dbReference type="Proteomes" id="UP000007752">
    <property type="component" value="Chromosome 1"/>
</dbReference>
<dbReference type="Proteomes" id="UP000059680">
    <property type="component" value="Chromosome 1"/>
</dbReference>
<dbReference type="GO" id="GO:0016020">
    <property type="term" value="C:membrane"/>
    <property type="evidence" value="ECO:0007669"/>
    <property type="project" value="UniProtKB-SubCell"/>
</dbReference>
<dbReference type="GO" id="GO:0015267">
    <property type="term" value="F:channel activity"/>
    <property type="evidence" value="ECO:0007669"/>
    <property type="project" value="InterPro"/>
</dbReference>
<dbReference type="CDD" id="cd00333">
    <property type="entry name" value="MIP"/>
    <property type="match status" value="1"/>
</dbReference>
<dbReference type="Gene3D" id="1.20.1080.10">
    <property type="entry name" value="Glycerol uptake facilitator protein"/>
    <property type="match status" value="1"/>
</dbReference>
<dbReference type="InterPro" id="IPR023271">
    <property type="entry name" value="Aquaporin-like"/>
</dbReference>
<dbReference type="InterPro" id="IPR034294">
    <property type="entry name" value="Aquaporin_transptr"/>
</dbReference>
<dbReference type="InterPro" id="IPR000425">
    <property type="entry name" value="MIP"/>
</dbReference>
<dbReference type="InterPro" id="IPR022357">
    <property type="entry name" value="MIP_CS"/>
</dbReference>
<dbReference type="NCBIfam" id="TIGR00861">
    <property type="entry name" value="MIP"/>
    <property type="match status" value="1"/>
</dbReference>
<dbReference type="PANTHER" id="PTHR45724:SF51">
    <property type="entry name" value="AQUAPORIN NIP1-2"/>
    <property type="match status" value="1"/>
</dbReference>
<dbReference type="PANTHER" id="PTHR45724">
    <property type="entry name" value="AQUAPORIN NIP2-1"/>
    <property type="match status" value="1"/>
</dbReference>
<dbReference type="Pfam" id="PF00230">
    <property type="entry name" value="MIP"/>
    <property type="match status" value="1"/>
</dbReference>
<dbReference type="PRINTS" id="PR00783">
    <property type="entry name" value="MINTRINSICP"/>
</dbReference>
<dbReference type="SUPFAM" id="SSF81338">
    <property type="entry name" value="Aquaporin-like"/>
    <property type="match status" value="1"/>
</dbReference>
<dbReference type="PROSITE" id="PS00221">
    <property type="entry name" value="MIP"/>
    <property type="match status" value="1"/>
</dbReference>
<name>NIP12_ORYSJ</name>